<name>PEPQ_PSEHA</name>
<dbReference type="EC" id="3.4.13.9"/>
<dbReference type="EC" id="3.8.2.2"/>
<dbReference type="EMBL" id="U56398">
    <property type="protein sequence ID" value="AAA99824.1"/>
    <property type="molecule type" value="Genomic_DNA"/>
</dbReference>
<dbReference type="SMR" id="P77814"/>
<dbReference type="MEROPS" id="M24.003"/>
<dbReference type="eggNOG" id="COG0006">
    <property type="taxonomic scope" value="Bacteria"/>
</dbReference>
<dbReference type="GO" id="GO:0005829">
    <property type="term" value="C:cytosol"/>
    <property type="evidence" value="ECO:0007669"/>
    <property type="project" value="TreeGrafter"/>
</dbReference>
<dbReference type="GO" id="GO:0004177">
    <property type="term" value="F:aminopeptidase activity"/>
    <property type="evidence" value="ECO:0007669"/>
    <property type="project" value="TreeGrafter"/>
</dbReference>
<dbReference type="GO" id="GO:0047862">
    <property type="term" value="F:diisopropyl-fluorophosphatase activity"/>
    <property type="evidence" value="ECO:0007669"/>
    <property type="project" value="RHEA"/>
</dbReference>
<dbReference type="GO" id="GO:0046872">
    <property type="term" value="F:metal ion binding"/>
    <property type="evidence" value="ECO:0007669"/>
    <property type="project" value="UniProtKB-KW"/>
</dbReference>
<dbReference type="GO" id="GO:0008235">
    <property type="term" value="F:metalloexopeptidase activity"/>
    <property type="evidence" value="ECO:0007669"/>
    <property type="project" value="UniProtKB-UniRule"/>
</dbReference>
<dbReference type="GO" id="GO:0016795">
    <property type="term" value="F:phosphoric triester hydrolase activity"/>
    <property type="evidence" value="ECO:0007669"/>
    <property type="project" value="InterPro"/>
</dbReference>
<dbReference type="GO" id="GO:0102009">
    <property type="term" value="F:proline dipeptidase activity"/>
    <property type="evidence" value="ECO:0007669"/>
    <property type="project" value="UniProtKB-EC"/>
</dbReference>
<dbReference type="GO" id="GO:0006508">
    <property type="term" value="P:proteolysis"/>
    <property type="evidence" value="ECO:0007669"/>
    <property type="project" value="UniProtKB-KW"/>
</dbReference>
<dbReference type="GO" id="GO:0009636">
    <property type="term" value="P:response to toxic substance"/>
    <property type="evidence" value="ECO:0007669"/>
    <property type="project" value="UniProtKB-KW"/>
</dbReference>
<dbReference type="CDD" id="cd01087">
    <property type="entry name" value="Prolidase"/>
    <property type="match status" value="1"/>
</dbReference>
<dbReference type="Gene3D" id="3.90.230.10">
    <property type="entry name" value="Creatinase/methionine aminopeptidase superfamily"/>
    <property type="match status" value="1"/>
</dbReference>
<dbReference type="Gene3D" id="3.40.350.10">
    <property type="entry name" value="Creatinase/prolidase N-terminal domain"/>
    <property type="match status" value="1"/>
</dbReference>
<dbReference type="HAMAP" id="MF_01279">
    <property type="entry name" value="X_Pro_dipeptid"/>
    <property type="match status" value="1"/>
</dbReference>
<dbReference type="InterPro" id="IPR029149">
    <property type="entry name" value="Creatin/AminoP/Spt16_N"/>
</dbReference>
<dbReference type="InterPro" id="IPR036005">
    <property type="entry name" value="Creatinase/aminopeptidase-like"/>
</dbReference>
<dbReference type="InterPro" id="IPR048819">
    <property type="entry name" value="PepQ_N"/>
</dbReference>
<dbReference type="InterPro" id="IPR000994">
    <property type="entry name" value="Pept_M24"/>
</dbReference>
<dbReference type="InterPro" id="IPR052433">
    <property type="entry name" value="X-Pro_dipept-like"/>
</dbReference>
<dbReference type="InterPro" id="IPR022846">
    <property type="entry name" value="X_Pro_dipept"/>
</dbReference>
<dbReference type="NCBIfam" id="NF010133">
    <property type="entry name" value="PRK13607.1"/>
    <property type="match status" value="1"/>
</dbReference>
<dbReference type="PANTHER" id="PTHR43226">
    <property type="entry name" value="XAA-PRO AMINOPEPTIDASE 3"/>
    <property type="match status" value="1"/>
</dbReference>
<dbReference type="PANTHER" id="PTHR43226:SF8">
    <property type="entry name" value="XAA-PRO DIPEPTIDASE"/>
    <property type="match status" value="1"/>
</dbReference>
<dbReference type="Pfam" id="PF21216">
    <property type="entry name" value="PepQ_N"/>
    <property type="match status" value="1"/>
</dbReference>
<dbReference type="Pfam" id="PF00557">
    <property type="entry name" value="Peptidase_M24"/>
    <property type="match status" value="1"/>
</dbReference>
<dbReference type="SUPFAM" id="SSF55920">
    <property type="entry name" value="Creatinase/aminopeptidase"/>
    <property type="match status" value="1"/>
</dbReference>
<organism>
    <name type="scientific">Pseudoalteromonas haloplanktis</name>
    <name type="common">Alteromonas haloplanktis</name>
    <dbReference type="NCBI Taxonomy" id="228"/>
    <lineage>
        <taxon>Bacteria</taxon>
        <taxon>Pseudomonadati</taxon>
        <taxon>Pseudomonadota</taxon>
        <taxon>Gammaproteobacteria</taxon>
        <taxon>Alteromonadales</taxon>
        <taxon>Pseudoalteromonadaceae</taxon>
        <taxon>Pseudoalteromonas</taxon>
    </lineage>
</organism>
<feature type="chain" id="PRO_0000298945" description="Xaa-Pro dipeptidase">
    <location>
        <begin position="1"/>
        <end position="440"/>
    </location>
</feature>
<feature type="binding site" evidence="1">
    <location>
        <position position="244"/>
    </location>
    <ligand>
        <name>Mn(2+)</name>
        <dbReference type="ChEBI" id="CHEBI:29035"/>
        <label>2</label>
    </ligand>
</feature>
<feature type="binding site" evidence="1">
    <location>
        <position position="255"/>
    </location>
    <ligand>
        <name>Mn(2+)</name>
        <dbReference type="ChEBI" id="CHEBI:29035"/>
        <label>1</label>
    </ligand>
</feature>
<feature type="binding site" evidence="1">
    <location>
        <position position="255"/>
    </location>
    <ligand>
        <name>Mn(2+)</name>
        <dbReference type="ChEBI" id="CHEBI:29035"/>
        <label>2</label>
    </ligand>
</feature>
<feature type="binding site" evidence="1">
    <location>
        <position position="336"/>
    </location>
    <ligand>
        <name>Mn(2+)</name>
        <dbReference type="ChEBI" id="CHEBI:29035"/>
        <label>1</label>
    </ligand>
</feature>
<feature type="binding site" evidence="1">
    <location>
        <position position="381"/>
    </location>
    <ligand>
        <name>Mn(2+)</name>
        <dbReference type="ChEBI" id="CHEBI:29035"/>
        <label>1</label>
    </ligand>
</feature>
<feature type="binding site" evidence="1">
    <location>
        <position position="420"/>
    </location>
    <ligand>
        <name>Mn(2+)</name>
        <dbReference type="ChEBI" id="CHEBI:29035"/>
        <label>1</label>
    </ligand>
</feature>
<feature type="binding site" evidence="1">
    <location>
        <position position="420"/>
    </location>
    <ligand>
        <name>Mn(2+)</name>
        <dbReference type="ChEBI" id="CHEBI:29035"/>
        <label>2</label>
    </ligand>
</feature>
<protein>
    <recommendedName>
        <fullName>Xaa-Pro dipeptidase</fullName>
        <shortName>X-Pro dipeptidase</shortName>
        <ecNumber>3.4.13.9</ecNumber>
    </recommendedName>
    <alternativeName>
        <fullName>DFPase</fullName>
    </alternativeName>
    <alternativeName>
        <fullName>Imidodipeptidase</fullName>
    </alternativeName>
    <alternativeName>
        <fullName>Organophosphorus acid anhydrolase</fullName>
        <shortName>OPAA</shortName>
        <ecNumber>3.8.2.2</ecNumber>
    </alternativeName>
    <alternativeName>
        <fullName>Proline dipeptidase</fullName>
        <shortName>Prolidase</shortName>
    </alternativeName>
</protein>
<gene>
    <name type="primary">pepQ</name>
    <name type="synonym">opa</name>
</gene>
<accession>P77814</accession>
<reference key="1">
    <citation type="journal article" date="1997" name="J. Ind. Microbiol. Biotechnol.">
        <title>Nucleotide sequence of a gene encoding an organophosphorus nerve agent degrading enzyme from Alteromonas haloplanktis.</title>
        <authorList>
            <person name="Cheng T.-C."/>
            <person name="Liu L."/>
            <person name="Wang B."/>
            <person name="Wu J."/>
            <person name="DeFrank J.J."/>
            <person name="Anderson D.M."/>
            <person name="Rastogi V.K."/>
            <person name="Hamilton A.B."/>
        </authorList>
    </citation>
    <scope>NUCLEOTIDE SEQUENCE [GENOMIC DNA]</scope>
    <scope>PROTEIN SEQUENCE OF 211-234 AND 350-356</scope>
    <scope>FUNCTION</scope>
    <scope>COFACTOR</scope>
    <scope>BIOPHYSICOCHEMICAL PROPERTIES</scope>
    <source>
        <strain>ATCC 23821 / IAM 12917 / JCM 20769 / LMG 2867 / NCIMB 1545</strain>
    </source>
</reference>
<proteinExistence type="evidence at protein level"/>
<sequence>MEKLAVLYAEHIATLQQRTRTICEQEGLEGLVIHSGQAKRQFLDDMYYPFKVNPHFKAWLPVIDNPHCWIVVNGSDKPKLIFYRPIDFWHKVPDEPRDFWAEYFDIELLLQPDQVEKLLPYDKAKFAYIGEYLEVAQALGFSIMNPEPVLNYIHYHRAYKTQYELECLRNANRIAVDGHKAARDAFFNGGSEFDIQQAYLMATRQSENEMPYGNIVALNENCAILHYTHFEPKAPQTHNSFLIDAGANFNGYAADITRTYDFKKQGEFADLVNAMTAHQIELGKSLKPGLLYGDLHIDCHNRIAQLLSDFDIVKLPAAEIVERQITSTFFPHGLGHHLGAQVHDVGGFMRDETGAHQAPPEGHPFLRCTRLIEKNQVFTIEPGLYFIDSLLGDLAQTDNKQFINWEKVEAFKPFGGIRIEDNIIVHEDSLENMTRNLLLD</sequence>
<keyword id="KW-0216">Detoxification</keyword>
<keyword id="KW-0224">Dipeptidase</keyword>
<keyword id="KW-0903">Direct protein sequencing</keyword>
<keyword id="KW-0378">Hydrolase</keyword>
<keyword id="KW-0464">Manganese</keyword>
<keyword id="KW-0479">Metal-binding</keyword>
<keyword id="KW-0482">Metalloprotease</keyword>
<keyword id="KW-0645">Protease</keyword>
<comment type="function">
    <text evidence="2">Splits dipeptides with a prolyl or hydroxyprolyl residue in the C-terminal position and a nonpolar amino acid at the N-terminal position. Also catalyzes the hydrolysis of toxic organophosphorus cholinesterase-inhibiting compounds including nerve gases such as diisopropylfluorophosphate (DFP), O-isopropyl methylphosphonofluoridate (sarin), O-pinacolyl methylphosphonofluoridate (soman), and O-cyclohexyl methylphosphonofluoridate.</text>
</comment>
<comment type="catalytic activity">
    <reaction>
        <text>Xaa-L-Pro dipeptide + H2O = an L-alpha-amino acid + L-proline</text>
        <dbReference type="Rhea" id="RHEA:76407"/>
        <dbReference type="ChEBI" id="CHEBI:15377"/>
        <dbReference type="ChEBI" id="CHEBI:59869"/>
        <dbReference type="ChEBI" id="CHEBI:60039"/>
        <dbReference type="ChEBI" id="CHEBI:195196"/>
        <dbReference type="EC" id="3.4.13.9"/>
    </reaction>
</comment>
<comment type="catalytic activity">
    <reaction>
        <text>diisopropyl fluorophosphate + H2O = diisopropyl phosphate + fluoride + 2 H(+)</text>
        <dbReference type="Rhea" id="RHEA:24100"/>
        <dbReference type="ChEBI" id="CHEBI:15377"/>
        <dbReference type="ChEBI" id="CHEBI:15378"/>
        <dbReference type="ChEBI" id="CHEBI:17051"/>
        <dbReference type="ChEBI" id="CHEBI:17941"/>
        <dbReference type="ChEBI" id="CHEBI:57896"/>
        <dbReference type="EC" id="3.8.2.2"/>
    </reaction>
</comment>
<comment type="cofactor">
    <cofactor evidence="4">
        <name>Mn(2+)</name>
        <dbReference type="ChEBI" id="CHEBI:29035"/>
    </cofactor>
    <text evidence="4">Binds 2 manganese ions per monomer.</text>
</comment>
<comment type="biophysicochemical properties">
    <phDependence>
        <text evidence="2">Optimum pH is 7.5.</text>
    </phDependence>
    <temperatureDependence>
        <text evidence="2">Optimum temperature is 40 degrees Celsius.</text>
    </temperatureDependence>
</comment>
<comment type="PTM">
    <text>The N-terminus is blocked.</text>
</comment>
<comment type="similarity">
    <text evidence="3">Belongs to the peptidase M24B family.</text>
</comment>
<evidence type="ECO:0000250" key="1"/>
<evidence type="ECO:0000269" key="2">
    <source>
    </source>
</evidence>
<evidence type="ECO:0000305" key="3"/>
<evidence type="ECO:0000305" key="4">
    <source>
    </source>
</evidence>